<feature type="chain" id="PRO_0000103350" description="DNA polymerase III subunit alpha">
    <location>
        <begin position="1"/>
        <end position="1036"/>
    </location>
</feature>
<gene>
    <name type="primary">dnaE</name>
    <name type="ordered locus">SPy_1284</name>
    <name type="ordered locus">M5005_Spy0990</name>
</gene>
<reference key="1">
    <citation type="journal article" date="2001" name="Proc. Natl. Acad. Sci. U.S.A.">
        <title>Complete genome sequence of an M1 strain of Streptococcus pyogenes.</title>
        <authorList>
            <person name="Ferretti J.J."/>
            <person name="McShan W.M."/>
            <person name="Ajdic D.J."/>
            <person name="Savic D.J."/>
            <person name="Savic G."/>
            <person name="Lyon K."/>
            <person name="Primeaux C."/>
            <person name="Sezate S."/>
            <person name="Suvorov A.N."/>
            <person name="Kenton S."/>
            <person name="Lai H.S."/>
            <person name="Lin S.P."/>
            <person name="Qian Y."/>
            <person name="Jia H.G."/>
            <person name="Najar F.Z."/>
            <person name="Ren Q."/>
            <person name="Zhu H."/>
            <person name="Song L."/>
            <person name="White J."/>
            <person name="Yuan X."/>
            <person name="Clifton S.W."/>
            <person name="Roe B.A."/>
            <person name="McLaughlin R.E."/>
        </authorList>
    </citation>
    <scope>NUCLEOTIDE SEQUENCE [LARGE SCALE GENOMIC DNA]</scope>
    <source>
        <strain>ATCC 700294 / SF370 / Serotype M1</strain>
    </source>
</reference>
<reference key="2">
    <citation type="journal article" date="2005" name="J. Infect. Dis.">
        <title>Evolutionary origin and emergence of a highly successful clone of serotype M1 group A Streptococcus involved multiple horizontal gene transfer events.</title>
        <authorList>
            <person name="Sumby P."/>
            <person name="Porcella S.F."/>
            <person name="Madrigal A.G."/>
            <person name="Barbian K.D."/>
            <person name="Virtaneva K."/>
            <person name="Ricklefs S.M."/>
            <person name="Sturdevant D.E."/>
            <person name="Graham M.R."/>
            <person name="Vuopio-Varkila J."/>
            <person name="Hoe N.P."/>
            <person name="Musser J.M."/>
        </authorList>
    </citation>
    <scope>NUCLEOTIDE SEQUENCE [LARGE SCALE GENOMIC DNA]</scope>
    <source>
        <strain>ATCC BAA-947 / MGAS5005 / Serotype M1</strain>
    </source>
</reference>
<name>DPO3A_STRP1</name>
<proteinExistence type="inferred from homology"/>
<comment type="function">
    <text evidence="1">DNA polymerase III is a complex, multichain enzyme responsible for most of the replicative synthesis in bacteria. This DNA polymerase also exhibits 3' to 5' exonuclease activity. The alpha chain is the DNA polymerase (By similarity).</text>
</comment>
<comment type="catalytic activity">
    <reaction>
        <text>DNA(n) + a 2'-deoxyribonucleoside 5'-triphosphate = DNA(n+1) + diphosphate</text>
        <dbReference type="Rhea" id="RHEA:22508"/>
        <dbReference type="Rhea" id="RHEA-COMP:17339"/>
        <dbReference type="Rhea" id="RHEA-COMP:17340"/>
        <dbReference type="ChEBI" id="CHEBI:33019"/>
        <dbReference type="ChEBI" id="CHEBI:61560"/>
        <dbReference type="ChEBI" id="CHEBI:173112"/>
        <dbReference type="EC" id="2.7.7.7"/>
    </reaction>
</comment>
<comment type="subunit">
    <text evidence="1">DNA polymerase III contains a core (composed of alpha, epsilon and theta chains) that associates with a tau subunit. This core dimerizes to form the PolIII' complex. PolIII' associates with the gamma complex (composed of gamma, delta, delta', psi and chi chains) and with the beta chain to form the complete DNA polymerase III complex (By similarity).</text>
</comment>
<comment type="subcellular location">
    <subcellularLocation>
        <location evidence="1">Cytoplasm</location>
    </subcellularLocation>
</comment>
<comment type="similarity">
    <text evidence="2">Belongs to the DNA polymerase type-C family. DnaE subfamily.</text>
</comment>
<organism>
    <name type="scientific">Streptococcus pyogenes serotype M1</name>
    <dbReference type="NCBI Taxonomy" id="301447"/>
    <lineage>
        <taxon>Bacteria</taxon>
        <taxon>Bacillati</taxon>
        <taxon>Bacillota</taxon>
        <taxon>Bacilli</taxon>
        <taxon>Lactobacillales</taxon>
        <taxon>Streptococcaceae</taxon>
        <taxon>Streptococcus</taxon>
    </lineage>
</organism>
<protein>
    <recommendedName>
        <fullName>DNA polymerase III subunit alpha</fullName>
        <ecNumber>2.7.7.7</ecNumber>
    </recommendedName>
</protein>
<sequence>MFAQLDTKTVYSFMDSLIDLNHYFERAKQFGYHTIGIMDKDNLYGAYHFIKGCQKNGLQPVLGLEIEILYQERQVLLNLIAQNTQGYHQLLKISTAKMSGKLHMDYFCQHLEGIAVIIPSKGWSDTLVVPFDYYIGVDQYTDLSHMDSKRQLIPLRTVRYFAQDDMETLHMLHAIRDNLSLAETPVVESDQELADCQQLTAFYQTHCPQALQNLEDLVSGIYYDFDTNLKLPHFNRDKSAKQELQDLTEAGLKEKGLWKEPYQSRLLHELVIISDMGFDDYFLIVWDLLRFGRSKGYYMGMGRGSAAGSLVAYALNITGIDPVQHDLLFERFLNKERYSMPDIDIDLPDIYRSEFLRYVRNRYGSDHSAQIVTFSTFGPKQAIRDVFKRFGVPEYELTNLTKKIGFKDSLATVYEKSISFRQVINSRTEFQKAFAIAKRIEGNPRQTSIHAAGIVMSDDALTNHIPLKSGDDMMITQYDAHAVEANGLLKMDFLGLRNLTFVQKMQEKVAKDYGCQIDITAIDLEDPQTLALFAKGDTKGIFQFEQNGAINLLKRIKPQRFEEIVATTSLNRPGASDYTTNFIKRREGQEKIDLIDPVIAPILEPTYGIMLYQEQVMQIAQVYAGFTLGKADLLRRAMSKKNLQEMQKMEEDFIASAKHLGRAEETARGLFKRMEKFAGYGFNRSHAFAYSALAFQLAYFKAHYPAVFYDIMMNYSSSDYITDALESDFQVAQVTINSIPYTDKIEASKIYMGLKNIKGLPRDFAYWIIEQRPFNSVEDFLTRTPEKYQKKVFLEPLIKIGLFDCFEPNRKKILDNLDGLLVFVNELGSLFSDSSFSWVDTKDYSVTEKYSLEQEIVGVGMSKHPLIDIAEKSTQTFTPISQLVKESEAVVLIQIDSIRIIRTKTSGQQMAFLSVNDTKKKLDVTLFPQEYAIYKDQLKEGEFYYLKGRIKERDHRLQMVCQQVQMAISQKYWLLVENHQFDSQISEILGAFPGTTPVVIHYQKNKETIALTKIQVHVTENLKEKLRPFVLKTVFR</sequence>
<accession>P0C0F3</accession>
<accession>Q48YG4</accession>
<accession>Q9FDF6</accession>
<keyword id="KW-0963">Cytoplasm</keyword>
<keyword id="KW-0235">DNA replication</keyword>
<keyword id="KW-0239">DNA-directed DNA polymerase</keyword>
<keyword id="KW-0548">Nucleotidyltransferase</keyword>
<keyword id="KW-1185">Reference proteome</keyword>
<keyword id="KW-0808">Transferase</keyword>
<evidence type="ECO:0000250" key="1"/>
<evidence type="ECO:0000305" key="2"/>
<dbReference type="EC" id="2.7.7.7"/>
<dbReference type="EMBL" id="AE004092">
    <property type="protein sequence ID" value="AAK34132.1"/>
    <property type="molecule type" value="Genomic_DNA"/>
</dbReference>
<dbReference type="EMBL" id="CP000017">
    <property type="protein sequence ID" value="AAZ51608.1"/>
    <property type="molecule type" value="Genomic_DNA"/>
</dbReference>
<dbReference type="RefSeq" id="NP_269411.1">
    <property type="nucleotide sequence ID" value="NC_002737.2"/>
</dbReference>
<dbReference type="SMR" id="P0C0F3"/>
<dbReference type="PaxDb" id="1314-HKU360_01033"/>
<dbReference type="KEGG" id="spy:SPy_1284"/>
<dbReference type="KEGG" id="spz:M5005_Spy0990"/>
<dbReference type="PATRIC" id="fig|160490.10.peg.1122"/>
<dbReference type="HOGENOM" id="CLU_001600_0_1_9"/>
<dbReference type="OMA" id="DFCMDGR"/>
<dbReference type="Proteomes" id="UP000000750">
    <property type="component" value="Chromosome"/>
</dbReference>
<dbReference type="GO" id="GO:0005737">
    <property type="term" value="C:cytoplasm"/>
    <property type="evidence" value="ECO:0007669"/>
    <property type="project" value="UniProtKB-SubCell"/>
</dbReference>
<dbReference type="GO" id="GO:0008408">
    <property type="term" value="F:3'-5' exonuclease activity"/>
    <property type="evidence" value="ECO:0007669"/>
    <property type="project" value="InterPro"/>
</dbReference>
<dbReference type="GO" id="GO:0003887">
    <property type="term" value="F:DNA-directed DNA polymerase activity"/>
    <property type="evidence" value="ECO:0007669"/>
    <property type="project" value="UniProtKB-KW"/>
</dbReference>
<dbReference type="GO" id="GO:0003676">
    <property type="term" value="F:nucleic acid binding"/>
    <property type="evidence" value="ECO:0007669"/>
    <property type="project" value="InterPro"/>
</dbReference>
<dbReference type="GO" id="GO:0006260">
    <property type="term" value="P:DNA replication"/>
    <property type="evidence" value="ECO:0007669"/>
    <property type="project" value="UniProtKB-KW"/>
</dbReference>
<dbReference type="CDD" id="cd04485">
    <property type="entry name" value="DnaE_OBF"/>
    <property type="match status" value="1"/>
</dbReference>
<dbReference type="CDD" id="cd07431">
    <property type="entry name" value="PHP_PolIIIA"/>
    <property type="match status" value="1"/>
</dbReference>
<dbReference type="Gene3D" id="1.10.150.870">
    <property type="match status" value="1"/>
</dbReference>
<dbReference type="Gene3D" id="1.10.10.1600">
    <property type="entry name" value="Bacterial DNA polymerase III alpha subunit, thumb domain"/>
    <property type="match status" value="1"/>
</dbReference>
<dbReference type="Gene3D" id="3.20.20.140">
    <property type="entry name" value="Metal-dependent hydrolases"/>
    <property type="match status" value="1"/>
</dbReference>
<dbReference type="Gene3D" id="2.40.50.140">
    <property type="entry name" value="Nucleic acid-binding proteins"/>
    <property type="match status" value="1"/>
</dbReference>
<dbReference type="InterPro" id="IPR011708">
    <property type="entry name" value="DNA_pol3_alpha_NTPase_dom"/>
</dbReference>
<dbReference type="InterPro" id="IPR041931">
    <property type="entry name" value="DNA_pol3_alpha_thumb_dom"/>
</dbReference>
<dbReference type="InterPro" id="IPR040982">
    <property type="entry name" value="DNA_pol3_finger"/>
</dbReference>
<dbReference type="InterPro" id="IPR004805">
    <property type="entry name" value="DnaE2/DnaE/PolC"/>
</dbReference>
<dbReference type="InterPro" id="IPR029460">
    <property type="entry name" value="DNAPol_HHH"/>
</dbReference>
<dbReference type="InterPro" id="IPR012340">
    <property type="entry name" value="NA-bd_OB-fold"/>
</dbReference>
<dbReference type="InterPro" id="IPR004365">
    <property type="entry name" value="NA-bd_OB_tRNA"/>
</dbReference>
<dbReference type="InterPro" id="IPR004013">
    <property type="entry name" value="PHP_dom"/>
</dbReference>
<dbReference type="InterPro" id="IPR003141">
    <property type="entry name" value="Pol/His_phosphatase_N"/>
</dbReference>
<dbReference type="InterPro" id="IPR016195">
    <property type="entry name" value="Pol/histidinol_Pase-like"/>
</dbReference>
<dbReference type="NCBIfam" id="TIGR00594">
    <property type="entry name" value="polc"/>
    <property type="match status" value="1"/>
</dbReference>
<dbReference type="NCBIfam" id="NF005582">
    <property type="entry name" value="PRK07279.1"/>
    <property type="match status" value="1"/>
</dbReference>
<dbReference type="PANTHER" id="PTHR32294">
    <property type="entry name" value="DNA POLYMERASE III SUBUNIT ALPHA"/>
    <property type="match status" value="1"/>
</dbReference>
<dbReference type="PANTHER" id="PTHR32294:SF0">
    <property type="entry name" value="DNA POLYMERASE III SUBUNIT ALPHA"/>
    <property type="match status" value="1"/>
</dbReference>
<dbReference type="Pfam" id="PF07733">
    <property type="entry name" value="DNA_pol3_alpha"/>
    <property type="match status" value="1"/>
</dbReference>
<dbReference type="Pfam" id="PF17657">
    <property type="entry name" value="DNA_pol3_finger"/>
    <property type="match status" value="1"/>
</dbReference>
<dbReference type="Pfam" id="PF14579">
    <property type="entry name" value="HHH_6"/>
    <property type="match status" value="1"/>
</dbReference>
<dbReference type="Pfam" id="PF02811">
    <property type="entry name" value="PHP"/>
    <property type="match status" value="1"/>
</dbReference>
<dbReference type="Pfam" id="PF01336">
    <property type="entry name" value="tRNA_anti-codon"/>
    <property type="match status" value="1"/>
</dbReference>
<dbReference type="SMART" id="SM00481">
    <property type="entry name" value="POLIIIAc"/>
    <property type="match status" value="1"/>
</dbReference>
<dbReference type="SUPFAM" id="SSF89550">
    <property type="entry name" value="PHP domain-like"/>
    <property type="match status" value="1"/>
</dbReference>